<dbReference type="EMBL" id="AK028946">
    <property type="protein sequence ID" value="BAC26209.1"/>
    <property type="molecule type" value="mRNA"/>
</dbReference>
<dbReference type="EMBL" id="AK160577">
    <property type="protein sequence ID" value="BAE35885.1"/>
    <property type="molecule type" value="mRNA"/>
</dbReference>
<dbReference type="EMBL" id="AL669814">
    <property type="status" value="NOT_ANNOTATED_CDS"/>
    <property type="molecule type" value="Genomic_DNA"/>
</dbReference>
<dbReference type="EMBL" id="BC023693">
    <property type="protein sequence ID" value="AAH23693.1"/>
    <property type="molecule type" value="mRNA"/>
</dbReference>
<dbReference type="EMBL" id="BC025550">
    <property type="protein sequence ID" value="AAH25550.1"/>
    <property type="molecule type" value="mRNA"/>
</dbReference>
<dbReference type="EMBL" id="BC027245">
    <property type="protein sequence ID" value="AAH27245.1"/>
    <property type="molecule type" value="mRNA"/>
</dbReference>
<dbReference type="EMBL" id="BC031196">
    <property type="protein sequence ID" value="AAH31196.1"/>
    <property type="molecule type" value="mRNA"/>
</dbReference>
<dbReference type="CCDS" id="CCDS24535.1"/>
<dbReference type="RefSeq" id="NP_666129.1">
    <property type="nucleotide sequence ID" value="NM_146017.3"/>
</dbReference>
<dbReference type="SMR" id="Q8QZW7"/>
<dbReference type="FunCoup" id="Q8QZW7">
    <property type="interactions" value="375"/>
</dbReference>
<dbReference type="STRING" id="10090.ENSMUSP00000020366"/>
<dbReference type="ChEMBL" id="CHEMBL2094133"/>
<dbReference type="DrugCentral" id="Q8QZW7"/>
<dbReference type="GlyCosmos" id="Q8QZW7">
    <property type="glycosylation" value="5 sites, No reported glycans"/>
</dbReference>
<dbReference type="GlyGen" id="Q8QZW7">
    <property type="glycosylation" value="5 sites"/>
</dbReference>
<dbReference type="PhosphoSitePlus" id="Q8QZW7"/>
<dbReference type="PaxDb" id="10090-ENSMUSP00000020366"/>
<dbReference type="Antibodypedia" id="4442">
    <property type="antibodies" value="92 antibodies from 19 providers"/>
</dbReference>
<dbReference type="DNASU" id="216643"/>
<dbReference type="Ensembl" id="ENSMUST00000020366.8">
    <property type="protein sequence ID" value="ENSMUSP00000020366.2"/>
    <property type="gene ID" value="ENSMUSG00000020159.9"/>
</dbReference>
<dbReference type="GeneID" id="216643"/>
<dbReference type="KEGG" id="mmu:216643"/>
<dbReference type="UCSC" id="uc007ikm.1">
    <property type="organism name" value="mouse"/>
</dbReference>
<dbReference type="AGR" id="MGI:2387597"/>
<dbReference type="CTD" id="2568"/>
<dbReference type="MGI" id="MGI:2387597">
    <property type="gene designation" value="Gabrp"/>
</dbReference>
<dbReference type="VEuPathDB" id="HostDB:ENSMUSG00000020159"/>
<dbReference type="eggNOG" id="KOG3643">
    <property type="taxonomic scope" value="Eukaryota"/>
</dbReference>
<dbReference type="GeneTree" id="ENSGT00940000160813"/>
<dbReference type="HOGENOM" id="CLU_010920_0_1_1"/>
<dbReference type="InParanoid" id="Q8QZW7"/>
<dbReference type="OMA" id="TTVTCNM"/>
<dbReference type="OrthoDB" id="8890589at2759"/>
<dbReference type="PhylomeDB" id="Q8QZW7"/>
<dbReference type="TreeFam" id="TF315453"/>
<dbReference type="BioGRID-ORCS" id="216643">
    <property type="hits" value="2 hits in 78 CRISPR screens"/>
</dbReference>
<dbReference type="ChiTaRS" id="Gabrp">
    <property type="organism name" value="mouse"/>
</dbReference>
<dbReference type="PRO" id="PR:Q8QZW7"/>
<dbReference type="Proteomes" id="UP000000589">
    <property type="component" value="Chromosome 11"/>
</dbReference>
<dbReference type="RNAct" id="Q8QZW7">
    <property type="molecule type" value="protein"/>
</dbReference>
<dbReference type="Bgee" id="ENSMUSG00000020159">
    <property type="expression patterns" value="Expressed in trachea and 80 other cell types or tissues"/>
</dbReference>
<dbReference type="ExpressionAtlas" id="Q8QZW7">
    <property type="expression patterns" value="baseline and differential"/>
</dbReference>
<dbReference type="GO" id="GO:0016324">
    <property type="term" value="C:apical plasma membrane"/>
    <property type="evidence" value="ECO:0007669"/>
    <property type="project" value="UniProtKB-SubCell"/>
</dbReference>
<dbReference type="GO" id="GO:0034707">
    <property type="term" value="C:chloride channel complex"/>
    <property type="evidence" value="ECO:0007669"/>
    <property type="project" value="UniProtKB-KW"/>
</dbReference>
<dbReference type="GO" id="GO:0005886">
    <property type="term" value="C:plasma membrane"/>
    <property type="evidence" value="ECO:0000250"/>
    <property type="project" value="UniProtKB"/>
</dbReference>
<dbReference type="GO" id="GO:0004890">
    <property type="term" value="F:GABA-A receptor activity"/>
    <property type="evidence" value="ECO:0000250"/>
    <property type="project" value="UniProtKB"/>
</dbReference>
<dbReference type="GO" id="GO:0022851">
    <property type="term" value="F:GABA-gated chloride ion channel activity"/>
    <property type="evidence" value="ECO:0000250"/>
    <property type="project" value="UniProtKB"/>
</dbReference>
<dbReference type="CDD" id="cd19058">
    <property type="entry name" value="LGIC_TM_GABAAR_pi"/>
    <property type="match status" value="1"/>
</dbReference>
<dbReference type="FunFam" id="2.70.170.10:FF:000011">
    <property type="entry name" value="Gamma-aminobutyric acid receptor subunit pi isoform X1"/>
    <property type="match status" value="1"/>
</dbReference>
<dbReference type="Gene3D" id="2.70.170.10">
    <property type="entry name" value="Neurotransmitter-gated ion-channel ligand-binding domain"/>
    <property type="match status" value="1"/>
</dbReference>
<dbReference type="Gene3D" id="1.20.58.390">
    <property type="entry name" value="Neurotransmitter-gated ion-channel transmembrane domain"/>
    <property type="match status" value="1"/>
</dbReference>
<dbReference type="InterPro" id="IPR006028">
    <property type="entry name" value="GABAA/Glycine_rcpt"/>
</dbReference>
<dbReference type="InterPro" id="IPR008100">
    <property type="entry name" value="GABAAp_rcpt"/>
</dbReference>
<dbReference type="InterPro" id="IPR047032">
    <property type="entry name" value="GABAAR_pi_TM"/>
</dbReference>
<dbReference type="InterPro" id="IPR006202">
    <property type="entry name" value="Neur_chan_lig-bd"/>
</dbReference>
<dbReference type="InterPro" id="IPR036734">
    <property type="entry name" value="Neur_chan_lig-bd_sf"/>
</dbReference>
<dbReference type="InterPro" id="IPR006201">
    <property type="entry name" value="Neur_channel"/>
</dbReference>
<dbReference type="InterPro" id="IPR036719">
    <property type="entry name" value="Neuro-gated_channel_TM_sf"/>
</dbReference>
<dbReference type="InterPro" id="IPR038050">
    <property type="entry name" value="Neuro_actylchol_rec"/>
</dbReference>
<dbReference type="InterPro" id="IPR006029">
    <property type="entry name" value="Neurotrans-gated_channel_TM"/>
</dbReference>
<dbReference type="InterPro" id="IPR018000">
    <property type="entry name" value="Neurotransmitter_ion_chnl_CS"/>
</dbReference>
<dbReference type="NCBIfam" id="TIGR00860">
    <property type="entry name" value="LIC"/>
    <property type="match status" value="1"/>
</dbReference>
<dbReference type="PANTHER" id="PTHR18945">
    <property type="entry name" value="NEUROTRANSMITTER GATED ION CHANNEL"/>
    <property type="match status" value="1"/>
</dbReference>
<dbReference type="Pfam" id="PF02931">
    <property type="entry name" value="Neur_chan_LBD"/>
    <property type="match status" value="1"/>
</dbReference>
<dbReference type="Pfam" id="PF02932">
    <property type="entry name" value="Neur_chan_memb"/>
    <property type="match status" value="1"/>
</dbReference>
<dbReference type="PRINTS" id="PR00253">
    <property type="entry name" value="GABAARECEPTR"/>
</dbReference>
<dbReference type="PRINTS" id="PR01724">
    <property type="entry name" value="GABAARPI"/>
</dbReference>
<dbReference type="PRINTS" id="PR00252">
    <property type="entry name" value="NRIONCHANNEL"/>
</dbReference>
<dbReference type="SUPFAM" id="SSF90112">
    <property type="entry name" value="Neurotransmitter-gated ion-channel transmembrane pore"/>
    <property type="match status" value="1"/>
</dbReference>
<dbReference type="SUPFAM" id="SSF63712">
    <property type="entry name" value="Nicotinic receptor ligand binding domain-like"/>
    <property type="match status" value="1"/>
</dbReference>
<dbReference type="PROSITE" id="PS00236">
    <property type="entry name" value="NEUROTR_ION_CHANNEL"/>
    <property type="match status" value="1"/>
</dbReference>
<comment type="function">
    <text evidence="1 2 5">Pi subunit of the heteropentameric ligand-gated chloride channel gated by gamma-aminobutyric acid (GABA) (By similarity). GABA-gated chloride channels, also named GABA(A) receptors (GABAAR), consist of five subunits arranged around a central pore and contain GABA active binding site(s) located at the alpha and beta subunit interfaces (By similarity). When activated by GABA, GABAARs selectively allow the flow of chloride anions across the cell membrane down their electrochemical gradient. Pi-containing GABAARs are mostly located in peripheral tissues. In the uterus, pi subunits modulate uterus contraction by altering the sensitivity of GABAARs to pregnanolone (By similarity). In the lungs, pi-containing GABAARs contribute to pulmonary fluid transport via luminal secretion of chloride (By similarity).</text>
</comment>
<comment type="catalytic activity">
    <reaction evidence="1">
        <text>chloride(in) = chloride(out)</text>
        <dbReference type="Rhea" id="RHEA:29823"/>
        <dbReference type="ChEBI" id="CHEBI:17996"/>
    </reaction>
</comment>
<comment type="subunit">
    <text evidence="1">Heteropentamer, formed by a combination of alpha (GABRA1-6), beta (GABRB1-3), gamma (GABRG1-3), delta (GABRD), epsilon (GABRE), rho (GABRR1-3), pi (GABRP) and theta (GABRQ) chains, each subunit exhibiting distinct physiological and pharmacological properties.</text>
</comment>
<comment type="subcellular location">
    <subcellularLocation>
        <location>Cell membrane</location>
        <topology evidence="6">Multi-pass membrane protein</topology>
    </subcellularLocation>
    <subcellularLocation>
        <location evidence="2">Apical cell membrane</location>
        <topology evidence="6">Multi-pass membrane protein</topology>
    </subcellularLocation>
    <text evidence="2">Located on the apical plasma membrane of alveolar epithelial type II cells.</text>
</comment>
<comment type="domain">
    <text evidence="3">GABAARs subunits share a common topological structure: a peptide sequence made up of a long extracellular N-terminal, four transmembrane domains, intracellular or cytoplasmic domain located between the third and the fourth transmembrane domains.</text>
</comment>
<comment type="similarity">
    <text evidence="7">Belongs to the ligand-gated ion channel (TC 1.A.9) family. Gamma-aminobutyric acid receptor (TC 1.A.9.5) subfamily. GABRP sub-subfamily.</text>
</comment>
<keyword id="KW-1003">Cell membrane</keyword>
<keyword id="KW-0868">Chloride</keyword>
<keyword id="KW-0869">Chloride channel</keyword>
<keyword id="KW-1015">Disulfide bond</keyword>
<keyword id="KW-0325">Glycoprotein</keyword>
<keyword id="KW-0407">Ion channel</keyword>
<keyword id="KW-0406">Ion transport</keyword>
<keyword id="KW-0472">Membrane</keyword>
<keyword id="KW-1185">Reference proteome</keyword>
<keyword id="KW-0732">Signal</keyword>
<keyword id="KW-0812">Transmembrane</keyword>
<keyword id="KW-1133">Transmembrane helix</keyword>
<keyword id="KW-0813">Transport</keyword>
<feature type="signal peptide" evidence="6">
    <location>
        <begin position="1"/>
        <end position="23"/>
    </location>
</feature>
<feature type="chain" id="PRO_0000000493" description="Gamma-aminobutyric acid receptor subunit pi" evidence="6">
    <location>
        <begin position="24"/>
        <end position="440"/>
    </location>
</feature>
<feature type="topological domain" description="Extracellular" evidence="7">
    <location>
        <begin position="24"/>
        <end position="241"/>
    </location>
</feature>
<feature type="transmembrane region" description="Helical" evidence="6">
    <location>
        <begin position="242"/>
        <end position="262"/>
    </location>
</feature>
<feature type="topological domain" description="Cytoplasmic" evidence="7">
    <location>
        <begin position="263"/>
        <end position="270"/>
    </location>
</feature>
<feature type="transmembrane region" description="Helical" evidence="6">
    <location>
        <begin position="271"/>
        <end position="290"/>
    </location>
</feature>
<feature type="topological domain" description="Extracellular" evidence="7">
    <location>
        <begin position="291"/>
        <end position="301"/>
    </location>
</feature>
<feature type="transmembrane region" description="Helical" evidence="6">
    <location>
        <begin position="302"/>
        <end position="322"/>
    </location>
</feature>
<feature type="topological domain" description="Cytoplasmic" evidence="7">
    <location>
        <begin position="323"/>
        <end position="419"/>
    </location>
</feature>
<feature type="transmembrane region" description="Helical" evidence="6">
    <location>
        <begin position="420"/>
        <end position="440"/>
    </location>
</feature>
<feature type="glycosylation site" description="N-linked (GlcNAc...) asparagine" evidence="6">
    <location>
        <position position="43"/>
    </location>
</feature>
<feature type="glycosylation site" description="N-linked (GlcNAc...) asparagine" evidence="6">
    <location>
        <position position="102"/>
    </location>
</feature>
<feature type="glycosylation site" description="N-linked (GlcNAc...) asparagine" evidence="6">
    <location>
        <position position="145"/>
    </location>
</feature>
<feature type="glycosylation site" description="N-linked (GlcNAc...) asparagine" evidence="6">
    <location>
        <position position="196"/>
    </location>
</feature>
<feature type="glycosylation site" description="N-linked (GlcNAc...) asparagine" evidence="6">
    <location>
        <position position="228"/>
    </location>
</feature>
<feature type="disulfide bond" evidence="4">
    <location>
        <begin position="160"/>
        <end position="174"/>
    </location>
</feature>
<proteinExistence type="evidence at transcript level"/>
<evidence type="ECO:0000250" key="1">
    <source>
        <dbReference type="UniProtKB" id="O00591"/>
    </source>
</evidence>
<evidence type="ECO:0000250" key="2">
    <source>
        <dbReference type="UniProtKB" id="O09028"/>
    </source>
</evidence>
<evidence type="ECO:0000250" key="3">
    <source>
        <dbReference type="UniProtKB" id="P18507"/>
    </source>
</evidence>
<evidence type="ECO:0000250" key="4">
    <source>
        <dbReference type="UniProtKB" id="P28472"/>
    </source>
</evidence>
<evidence type="ECO:0000250" key="5">
    <source>
        <dbReference type="UniProtKB" id="P47870"/>
    </source>
</evidence>
<evidence type="ECO:0000255" key="6"/>
<evidence type="ECO:0000305" key="7"/>
<evidence type="ECO:0000312" key="8">
    <source>
        <dbReference type="MGI" id="MGI:2387597"/>
    </source>
</evidence>
<protein>
    <recommendedName>
        <fullName>Gamma-aminobutyric acid receptor subunit pi</fullName>
    </recommendedName>
    <alternativeName>
        <fullName evidence="1">GABA(A) receptor subunit pi</fullName>
        <shortName>GABAAR subunit pi</shortName>
    </alternativeName>
</protein>
<gene>
    <name evidence="8" type="primary">Gabrp</name>
</gene>
<reference key="1">
    <citation type="journal article" date="2005" name="Science">
        <title>The transcriptional landscape of the mammalian genome.</title>
        <authorList>
            <person name="Carninci P."/>
            <person name="Kasukawa T."/>
            <person name="Katayama S."/>
            <person name="Gough J."/>
            <person name="Frith M.C."/>
            <person name="Maeda N."/>
            <person name="Oyama R."/>
            <person name="Ravasi T."/>
            <person name="Lenhard B."/>
            <person name="Wells C."/>
            <person name="Kodzius R."/>
            <person name="Shimokawa K."/>
            <person name="Bajic V.B."/>
            <person name="Brenner S.E."/>
            <person name="Batalov S."/>
            <person name="Forrest A.R."/>
            <person name="Zavolan M."/>
            <person name="Davis M.J."/>
            <person name="Wilming L.G."/>
            <person name="Aidinis V."/>
            <person name="Allen J.E."/>
            <person name="Ambesi-Impiombato A."/>
            <person name="Apweiler R."/>
            <person name="Aturaliya R.N."/>
            <person name="Bailey T.L."/>
            <person name="Bansal M."/>
            <person name="Baxter L."/>
            <person name="Beisel K.W."/>
            <person name="Bersano T."/>
            <person name="Bono H."/>
            <person name="Chalk A.M."/>
            <person name="Chiu K.P."/>
            <person name="Choudhary V."/>
            <person name="Christoffels A."/>
            <person name="Clutterbuck D.R."/>
            <person name="Crowe M.L."/>
            <person name="Dalla E."/>
            <person name="Dalrymple B.P."/>
            <person name="de Bono B."/>
            <person name="Della Gatta G."/>
            <person name="di Bernardo D."/>
            <person name="Down T."/>
            <person name="Engstrom P."/>
            <person name="Fagiolini M."/>
            <person name="Faulkner G."/>
            <person name="Fletcher C.F."/>
            <person name="Fukushima T."/>
            <person name="Furuno M."/>
            <person name="Futaki S."/>
            <person name="Gariboldi M."/>
            <person name="Georgii-Hemming P."/>
            <person name="Gingeras T.R."/>
            <person name="Gojobori T."/>
            <person name="Green R.E."/>
            <person name="Gustincich S."/>
            <person name="Harbers M."/>
            <person name="Hayashi Y."/>
            <person name="Hensch T.K."/>
            <person name="Hirokawa N."/>
            <person name="Hill D."/>
            <person name="Huminiecki L."/>
            <person name="Iacono M."/>
            <person name="Ikeo K."/>
            <person name="Iwama A."/>
            <person name="Ishikawa T."/>
            <person name="Jakt M."/>
            <person name="Kanapin A."/>
            <person name="Katoh M."/>
            <person name="Kawasawa Y."/>
            <person name="Kelso J."/>
            <person name="Kitamura H."/>
            <person name="Kitano H."/>
            <person name="Kollias G."/>
            <person name="Krishnan S.P."/>
            <person name="Kruger A."/>
            <person name="Kummerfeld S.K."/>
            <person name="Kurochkin I.V."/>
            <person name="Lareau L.F."/>
            <person name="Lazarevic D."/>
            <person name="Lipovich L."/>
            <person name="Liu J."/>
            <person name="Liuni S."/>
            <person name="McWilliam S."/>
            <person name="Madan Babu M."/>
            <person name="Madera M."/>
            <person name="Marchionni L."/>
            <person name="Matsuda H."/>
            <person name="Matsuzawa S."/>
            <person name="Miki H."/>
            <person name="Mignone F."/>
            <person name="Miyake S."/>
            <person name="Morris K."/>
            <person name="Mottagui-Tabar S."/>
            <person name="Mulder N."/>
            <person name="Nakano N."/>
            <person name="Nakauchi H."/>
            <person name="Ng P."/>
            <person name="Nilsson R."/>
            <person name="Nishiguchi S."/>
            <person name="Nishikawa S."/>
            <person name="Nori F."/>
            <person name="Ohara O."/>
            <person name="Okazaki Y."/>
            <person name="Orlando V."/>
            <person name="Pang K.C."/>
            <person name="Pavan W.J."/>
            <person name="Pavesi G."/>
            <person name="Pesole G."/>
            <person name="Petrovsky N."/>
            <person name="Piazza S."/>
            <person name="Reed J."/>
            <person name="Reid J.F."/>
            <person name="Ring B.Z."/>
            <person name="Ringwald M."/>
            <person name="Rost B."/>
            <person name="Ruan Y."/>
            <person name="Salzberg S.L."/>
            <person name="Sandelin A."/>
            <person name="Schneider C."/>
            <person name="Schoenbach C."/>
            <person name="Sekiguchi K."/>
            <person name="Semple C.A."/>
            <person name="Seno S."/>
            <person name="Sessa L."/>
            <person name="Sheng Y."/>
            <person name="Shibata Y."/>
            <person name="Shimada H."/>
            <person name="Shimada K."/>
            <person name="Silva D."/>
            <person name="Sinclair B."/>
            <person name="Sperling S."/>
            <person name="Stupka E."/>
            <person name="Sugiura K."/>
            <person name="Sultana R."/>
            <person name="Takenaka Y."/>
            <person name="Taki K."/>
            <person name="Tammoja K."/>
            <person name="Tan S.L."/>
            <person name="Tang S."/>
            <person name="Taylor M.S."/>
            <person name="Tegner J."/>
            <person name="Teichmann S.A."/>
            <person name="Ueda H.R."/>
            <person name="van Nimwegen E."/>
            <person name="Verardo R."/>
            <person name="Wei C.L."/>
            <person name="Yagi K."/>
            <person name="Yamanishi H."/>
            <person name="Zabarovsky E."/>
            <person name="Zhu S."/>
            <person name="Zimmer A."/>
            <person name="Hide W."/>
            <person name="Bult C."/>
            <person name="Grimmond S.M."/>
            <person name="Teasdale R.D."/>
            <person name="Liu E.T."/>
            <person name="Brusic V."/>
            <person name="Quackenbush J."/>
            <person name="Wahlestedt C."/>
            <person name="Mattick J.S."/>
            <person name="Hume D.A."/>
            <person name="Kai C."/>
            <person name="Sasaki D."/>
            <person name="Tomaru Y."/>
            <person name="Fukuda S."/>
            <person name="Kanamori-Katayama M."/>
            <person name="Suzuki M."/>
            <person name="Aoki J."/>
            <person name="Arakawa T."/>
            <person name="Iida J."/>
            <person name="Imamura K."/>
            <person name="Itoh M."/>
            <person name="Kato T."/>
            <person name="Kawaji H."/>
            <person name="Kawagashira N."/>
            <person name="Kawashima T."/>
            <person name="Kojima M."/>
            <person name="Kondo S."/>
            <person name="Konno H."/>
            <person name="Nakano K."/>
            <person name="Ninomiya N."/>
            <person name="Nishio T."/>
            <person name="Okada M."/>
            <person name="Plessy C."/>
            <person name="Shibata K."/>
            <person name="Shiraki T."/>
            <person name="Suzuki S."/>
            <person name="Tagami M."/>
            <person name="Waki K."/>
            <person name="Watahiki A."/>
            <person name="Okamura-Oho Y."/>
            <person name="Suzuki H."/>
            <person name="Kawai J."/>
            <person name="Hayashizaki Y."/>
        </authorList>
    </citation>
    <scope>NUCLEOTIDE SEQUENCE [LARGE SCALE MRNA]</scope>
    <source>
        <strain>C57BL/6J</strain>
        <tissue>Skin</tissue>
    </source>
</reference>
<reference key="2">
    <citation type="submission" date="2004-11" db="EMBL/GenBank/DDBJ databases">
        <authorList>
            <person name="Brown J."/>
        </authorList>
    </citation>
    <scope>NUCLEOTIDE SEQUENCE [LARGE SCALE GENOMIC DNA]</scope>
</reference>
<reference key="3">
    <citation type="journal article" date="2004" name="Genome Res.">
        <title>The status, quality, and expansion of the NIH full-length cDNA project: the Mammalian Gene Collection (MGC).</title>
        <authorList>
            <consortium name="The MGC Project Team"/>
        </authorList>
    </citation>
    <scope>NUCLEOTIDE SEQUENCE [LARGE SCALE MRNA]</scope>
    <source>
        <strain>FVB/N</strain>
        <strain>FVB/N-3</strain>
        <tissue>Mammary tumor</tissue>
    </source>
</reference>
<accession>Q8QZW7</accession>
<accession>Q3TUT6</accession>
<sequence>MSYSLYLAFLCLSLLTQRTCIQGNQVNVEVSRSDKLSLPGFENLTAGYNKFLRPNFGGDPVRIALTLDIASISSISESNMDYTATIYLRQRWTDPRLVFEGNKSFTLDARLVEFLWVPDTYIVESKKSFLHEVTVGNRLIRLFSNGTVLYALRITTTVTCNMDLSKYPMDTQTCKLQLESWGYDGNDVEFSWLRGNDSVRGLENLRLAQYTIQQYFTLVTVSQQETGNYTRLVLQFELRRNVLYFILETYVPSTFLVVLSWVSFWISLDSVPARTCIGVTTVLSMTTLMIGSRTSLPNTNCFIKAIDVYLGICFSFVFGALLEYAVAHYSSLQQMAVKDRGPAKDSEEVNITNIINSSISSFKRKISFASIEISGDNVNYSDLTMKASDKFKFVFREKISRIIDYFTIQNPSNVDRYSKLLFPLIFMLANVFYWAYYMYF</sequence>
<organism>
    <name type="scientific">Mus musculus</name>
    <name type="common">Mouse</name>
    <dbReference type="NCBI Taxonomy" id="10090"/>
    <lineage>
        <taxon>Eukaryota</taxon>
        <taxon>Metazoa</taxon>
        <taxon>Chordata</taxon>
        <taxon>Craniata</taxon>
        <taxon>Vertebrata</taxon>
        <taxon>Euteleostomi</taxon>
        <taxon>Mammalia</taxon>
        <taxon>Eutheria</taxon>
        <taxon>Euarchontoglires</taxon>
        <taxon>Glires</taxon>
        <taxon>Rodentia</taxon>
        <taxon>Myomorpha</taxon>
        <taxon>Muroidea</taxon>
        <taxon>Muridae</taxon>
        <taxon>Murinae</taxon>
        <taxon>Mus</taxon>
        <taxon>Mus</taxon>
    </lineage>
</organism>
<name>GBRP_MOUSE</name>